<gene>
    <name evidence="1" type="primary">caiC</name>
    <name type="ordered locus">EcHS_A0041</name>
</gene>
<organism>
    <name type="scientific">Escherichia coli O9:H4 (strain HS)</name>
    <dbReference type="NCBI Taxonomy" id="331112"/>
    <lineage>
        <taxon>Bacteria</taxon>
        <taxon>Pseudomonadati</taxon>
        <taxon>Pseudomonadota</taxon>
        <taxon>Gammaproteobacteria</taxon>
        <taxon>Enterobacterales</taxon>
        <taxon>Enterobacteriaceae</taxon>
        <taxon>Escherichia</taxon>
    </lineage>
</organism>
<feature type="chain" id="PRO_0000316267" description="Crotonobetaine/carnitine--CoA ligase">
    <location>
        <begin position="1"/>
        <end position="517"/>
    </location>
</feature>
<name>CAIC_ECOHS</name>
<reference key="1">
    <citation type="journal article" date="2008" name="J. Bacteriol.">
        <title>The pangenome structure of Escherichia coli: comparative genomic analysis of E. coli commensal and pathogenic isolates.</title>
        <authorList>
            <person name="Rasko D.A."/>
            <person name="Rosovitz M.J."/>
            <person name="Myers G.S.A."/>
            <person name="Mongodin E.F."/>
            <person name="Fricke W.F."/>
            <person name="Gajer P."/>
            <person name="Crabtree J."/>
            <person name="Sebaihia M."/>
            <person name="Thomson N.R."/>
            <person name="Chaudhuri R."/>
            <person name="Henderson I.R."/>
            <person name="Sperandio V."/>
            <person name="Ravel J."/>
        </authorList>
    </citation>
    <scope>NUCLEOTIDE SEQUENCE [LARGE SCALE GENOMIC DNA]</scope>
    <source>
        <strain>HS</strain>
    </source>
</reference>
<evidence type="ECO:0000255" key="1">
    <source>
        <dbReference type="HAMAP-Rule" id="MF_01524"/>
    </source>
</evidence>
<evidence type="ECO:0000305" key="2"/>
<keyword id="KW-0436">Ligase</keyword>
<sequence>MDIIGGQHLRQMWDDLADVYGHKTALICESSGGVVNRYSYLELNQEINRTANLFYTLGIRKGDKVALHLDNCPEFIFCWFGLAKIGAIMVPINARLLREESAWILQNSQACLLVTSAQFYPMYQQIQQEDATQLRHICLTDVALPADDGVSSFTQLKNQQPATLCYAPPLSTDDTAEILFTSGTTSRPKGVVITHYNLRFAGYYSAWQCALRDDDVYLTVMPAFHIDCQCTAAMAAFSAGATFVLVEKYSARAFWGQVQKYRATITECIPMMIRTLMVQPPSANDRQHRLREVMFYLNLSEQEKDAFCERFGVRLLTSYGMTETIVGIIGDRPGDKRRWPSIGRAGFCYEAEIRDDHNRPLPAGEIGEICIKGVPGKTIFKEYFLNPKATAKVLEADGWLHTGDTGYCDEEGFFYFVDRRCNMIKRGGENVSCVELENIIATHPKIQDIVVVGIKDSIRDEAIKAFVVLNEGETLSEEEFFRFCEQNMAKFKVPSYLEIRKDLPRNCSGKIIRKNLK</sequence>
<dbReference type="EC" id="6.2.1.48" evidence="1"/>
<dbReference type="EMBL" id="CP000802">
    <property type="protein sequence ID" value="ABV04441.1"/>
    <property type="status" value="ALT_INIT"/>
    <property type="molecule type" value="Genomic_DNA"/>
</dbReference>
<dbReference type="RefSeq" id="WP_001297614.1">
    <property type="nucleotide sequence ID" value="NC_009800.1"/>
</dbReference>
<dbReference type="SMR" id="A7ZVY7"/>
<dbReference type="GeneID" id="75203964"/>
<dbReference type="KEGG" id="ecx:EcHS_A0041"/>
<dbReference type="HOGENOM" id="CLU_000022_59_0_6"/>
<dbReference type="UniPathway" id="UPA00117"/>
<dbReference type="GO" id="GO:0051108">
    <property type="term" value="F:carnitine-CoA ligase activity"/>
    <property type="evidence" value="ECO:0007669"/>
    <property type="project" value="InterPro"/>
</dbReference>
<dbReference type="GO" id="GO:0051109">
    <property type="term" value="F:crotonobetaine-CoA ligase activity"/>
    <property type="evidence" value="ECO:0007669"/>
    <property type="project" value="InterPro"/>
</dbReference>
<dbReference type="GO" id="GO:0031956">
    <property type="term" value="F:medium-chain fatty acid-CoA ligase activity"/>
    <property type="evidence" value="ECO:0007669"/>
    <property type="project" value="TreeGrafter"/>
</dbReference>
<dbReference type="GO" id="GO:0009437">
    <property type="term" value="P:carnitine metabolic process"/>
    <property type="evidence" value="ECO:0007669"/>
    <property type="project" value="UniProtKB-UniRule"/>
</dbReference>
<dbReference type="GO" id="GO:0006631">
    <property type="term" value="P:fatty acid metabolic process"/>
    <property type="evidence" value="ECO:0007669"/>
    <property type="project" value="TreeGrafter"/>
</dbReference>
<dbReference type="CDD" id="cd05934">
    <property type="entry name" value="FACL_DitJ_like"/>
    <property type="match status" value="1"/>
</dbReference>
<dbReference type="FunFam" id="3.30.300.30:FF:000011">
    <property type="entry name" value="Crotonobetaine/carnitine--CoA ligase"/>
    <property type="match status" value="1"/>
</dbReference>
<dbReference type="FunFam" id="3.40.50.12780:FF:000017">
    <property type="entry name" value="Crotonobetaine/carnitine--CoA ligase"/>
    <property type="match status" value="1"/>
</dbReference>
<dbReference type="Gene3D" id="3.30.300.30">
    <property type="match status" value="1"/>
</dbReference>
<dbReference type="Gene3D" id="3.40.50.12780">
    <property type="entry name" value="N-terminal domain of ligase-like"/>
    <property type="match status" value="1"/>
</dbReference>
<dbReference type="HAMAP" id="MF_01524">
    <property type="entry name" value="CaiC"/>
    <property type="match status" value="1"/>
</dbReference>
<dbReference type="InterPro" id="IPR025110">
    <property type="entry name" value="AMP-bd_C"/>
</dbReference>
<dbReference type="InterPro" id="IPR045851">
    <property type="entry name" value="AMP-bd_C_sf"/>
</dbReference>
<dbReference type="InterPro" id="IPR020845">
    <property type="entry name" value="AMP-binding_CS"/>
</dbReference>
<dbReference type="InterPro" id="IPR000873">
    <property type="entry name" value="AMP-dep_synth/lig_dom"/>
</dbReference>
<dbReference type="InterPro" id="IPR042099">
    <property type="entry name" value="ANL_N_sf"/>
</dbReference>
<dbReference type="InterPro" id="IPR023456">
    <property type="entry name" value="CaiC"/>
</dbReference>
<dbReference type="NCBIfam" id="NF005947">
    <property type="entry name" value="PRK08008.1"/>
    <property type="match status" value="1"/>
</dbReference>
<dbReference type="PANTHER" id="PTHR43201">
    <property type="entry name" value="ACYL-COA SYNTHETASE"/>
    <property type="match status" value="1"/>
</dbReference>
<dbReference type="PANTHER" id="PTHR43201:SF5">
    <property type="entry name" value="MEDIUM-CHAIN ACYL-COA LIGASE ACSF2, MITOCHONDRIAL"/>
    <property type="match status" value="1"/>
</dbReference>
<dbReference type="Pfam" id="PF00501">
    <property type="entry name" value="AMP-binding"/>
    <property type="match status" value="1"/>
</dbReference>
<dbReference type="Pfam" id="PF13193">
    <property type="entry name" value="AMP-binding_C"/>
    <property type="match status" value="1"/>
</dbReference>
<dbReference type="SUPFAM" id="SSF56801">
    <property type="entry name" value="Acetyl-CoA synthetase-like"/>
    <property type="match status" value="1"/>
</dbReference>
<dbReference type="PROSITE" id="PS00455">
    <property type="entry name" value="AMP_BINDING"/>
    <property type="match status" value="1"/>
</dbReference>
<comment type="function">
    <text evidence="1">Catalyzes the transfer of CoA to carnitine, generating the initial carnitinyl-CoA needed for the CaiB reaction cycle. Also has activity toward crotonobetaine and gamma-butyrobetaine.</text>
</comment>
<comment type="catalytic activity">
    <reaction evidence="1">
        <text>4-(trimethylamino)butanoate + ATP + CoA = 4-(trimethylamino)butanoyl-CoA + AMP + diphosphate</text>
        <dbReference type="Rhea" id="RHEA:55960"/>
        <dbReference type="ChEBI" id="CHEBI:16244"/>
        <dbReference type="ChEBI" id="CHEBI:30616"/>
        <dbReference type="ChEBI" id="CHEBI:33019"/>
        <dbReference type="ChEBI" id="CHEBI:57287"/>
        <dbReference type="ChEBI" id="CHEBI:61513"/>
        <dbReference type="ChEBI" id="CHEBI:456215"/>
        <dbReference type="EC" id="6.2.1.48"/>
    </reaction>
</comment>
<comment type="catalytic activity">
    <reaction evidence="1">
        <text>crotonobetaine + ATP + CoA = crotonobetainyl-CoA + AMP + diphosphate</text>
        <dbReference type="Rhea" id="RHEA:30079"/>
        <dbReference type="ChEBI" id="CHEBI:17237"/>
        <dbReference type="ChEBI" id="CHEBI:30616"/>
        <dbReference type="ChEBI" id="CHEBI:33019"/>
        <dbReference type="ChEBI" id="CHEBI:57287"/>
        <dbReference type="ChEBI" id="CHEBI:60933"/>
        <dbReference type="ChEBI" id="CHEBI:456215"/>
        <dbReference type="EC" id="6.2.1.48"/>
    </reaction>
</comment>
<comment type="catalytic activity">
    <reaction evidence="1">
        <text>(R)-carnitine + ATP + CoA = (R)-carnitinyl-CoA + AMP + diphosphate</text>
        <dbReference type="Rhea" id="RHEA:28514"/>
        <dbReference type="ChEBI" id="CHEBI:16347"/>
        <dbReference type="ChEBI" id="CHEBI:30616"/>
        <dbReference type="ChEBI" id="CHEBI:33019"/>
        <dbReference type="ChEBI" id="CHEBI:57287"/>
        <dbReference type="ChEBI" id="CHEBI:60932"/>
        <dbReference type="ChEBI" id="CHEBI:456215"/>
        <dbReference type="EC" id="6.2.1.48"/>
    </reaction>
</comment>
<comment type="pathway">
    <text evidence="1">Amine and polyamine metabolism; carnitine metabolism.</text>
</comment>
<comment type="similarity">
    <text evidence="1">Belongs to the ATP-dependent AMP-binding enzyme family.</text>
</comment>
<comment type="sequence caution" evidence="2">
    <conflict type="erroneous initiation">
        <sequence resource="EMBL-CDS" id="ABV04441"/>
    </conflict>
</comment>
<proteinExistence type="inferred from homology"/>
<accession>A7ZVY7</accession>
<protein>
    <recommendedName>
        <fullName evidence="1">Crotonobetaine/carnitine--CoA ligase</fullName>
        <ecNumber evidence="1">6.2.1.48</ecNumber>
    </recommendedName>
</protein>